<gene>
    <name type="primary">Man2b1</name>
    <name type="synonym">Laman</name>
    <name type="synonym">Man2b</name>
    <name type="synonym">Manb</name>
</gene>
<evidence type="ECO:0000250" key="1"/>
<evidence type="ECO:0000255" key="2"/>
<evidence type="ECO:0000305" key="3"/>
<accession>O09159</accession>
<accession>O55037</accession>
<accession>Q3UGH3</accession>
<accession>Q64443</accession>
<accession>Q9DBQ1</accession>
<reference key="1">
    <citation type="journal article" date="1997" name="Biochem. J.">
        <title>Lysosomal alpha-mannosidases of mouse tissues: characteristics of the isoenzymes, and cloning and expression of a full-length cDNA.</title>
        <authorList>
            <person name="Beccari T."/>
            <person name="Appolloni M.G."/>
            <person name="Costanzi E."/>
            <person name="Stinchi S."/>
            <person name="Stirling J.L."/>
            <person name="Della Fazia M.A."/>
            <person name="Servillo G."/>
            <person name="Viola M.P."/>
            <person name="Orlacchio A."/>
        </authorList>
    </citation>
    <scope>NUCLEOTIDE SEQUENCE [MRNA]</scope>
    <source>
        <tissue>Macrophage</tissue>
    </source>
</reference>
<reference key="2">
    <citation type="journal article" date="1998" name="Mamm. Genome">
        <title>Promoter characterization and structure of the gene encoding mouse lysosomal alpha-d-mannosidase.</title>
        <authorList>
            <person name="Stinchi S."/>
            <person name="Orlacchio A."/>
            <person name="Costanzi E."/>
            <person name="Stirling J.L."/>
            <person name="Menghini A.R."/>
            <person name="Orlacchio A."/>
            <person name="Beccari T."/>
        </authorList>
    </citation>
    <scope>NUCLEOTIDE SEQUENCE [GENOMIC DNA]</scope>
</reference>
<reference key="3">
    <citation type="journal article" date="2005" name="Science">
        <title>The transcriptional landscape of the mammalian genome.</title>
        <authorList>
            <person name="Carninci P."/>
            <person name="Kasukawa T."/>
            <person name="Katayama S."/>
            <person name="Gough J."/>
            <person name="Frith M.C."/>
            <person name="Maeda N."/>
            <person name="Oyama R."/>
            <person name="Ravasi T."/>
            <person name="Lenhard B."/>
            <person name="Wells C."/>
            <person name="Kodzius R."/>
            <person name="Shimokawa K."/>
            <person name="Bajic V.B."/>
            <person name="Brenner S.E."/>
            <person name="Batalov S."/>
            <person name="Forrest A.R."/>
            <person name="Zavolan M."/>
            <person name="Davis M.J."/>
            <person name="Wilming L.G."/>
            <person name="Aidinis V."/>
            <person name="Allen J.E."/>
            <person name="Ambesi-Impiombato A."/>
            <person name="Apweiler R."/>
            <person name="Aturaliya R.N."/>
            <person name="Bailey T.L."/>
            <person name="Bansal M."/>
            <person name="Baxter L."/>
            <person name="Beisel K.W."/>
            <person name="Bersano T."/>
            <person name="Bono H."/>
            <person name="Chalk A.M."/>
            <person name="Chiu K.P."/>
            <person name="Choudhary V."/>
            <person name="Christoffels A."/>
            <person name="Clutterbuck D.R."/>
            <person name="Crowe M.L."/>
            <person name="Dalla E."/>
            <person name="Dalrymple B.P."/>
            <person name="de Bono B."/>
            <person name="Della Gatta G."/>
            <person name="di Bernardo D."/>
            <person name="Down T."/>
            <person name="Engstrom P."/>
            <person name="Fagiolini M."/>
            <person name="Faulkner G."/>
            <person name="Fletcher C.F."/>
            <person name="Fukushima T."/>
            <person name="Furuno M."/>
            <person name="Futaki S."/>
            <person name="Gariboldi M."/>
            <person name="Georgii-Hemming P."/>
            <person name="Gingeras T.R."/>
            <person name="Gojobori T."/>
            <person name="Green R.E."/>
            <person name="Gustincich S."/>
            <person name="Harbers M."/>
            <person name="Hayashi Y."/>
            <person name="Hensch T.K."/>
            <person name="Hirokawa N."/>
            <person name="Hill D."/>
            <person name="Huminiecki L."/>
            <person name="Iacono M."/>
            <person name="Ikeo K."/>
            <person name="Iwama A."/>
            <person name="Ishikawa T."/>
            <person name="Jakt M."/>
            <person name="Kanapin A."/>
            <person name="Katoh M."/>
            <person name="Kawasawa Y."/>
            <person name="Kelso J."/>
            <person name="Kitamura H."/>
            <person name="Kitano H."/>
            <person name="Kollias G."/>
            <person name="Krishnan S.P."/>
            <person name="Kruger A."/>
            <person name="Kummerfeld S.K."/>
            <person name="Kurochkin I.V."/>
            <person name="Lareau L.F."/>
            <person name="Lazarevic D."/>
            <person name="Lipovich L."/>
            <person name="Liu J."/>
            <person name="Liuni S."/>
            <person name="McWilliam S."/>
            <person name="Madan Babu M."/>
            <person name="Madera M."/>
            <person name="Marchionni L."/>
            <person name="Matsuda H."/>
            <person name="Matsuzawa S."/>
            <person name="Miki H."/>
            <person name="Mignone F."/>
            <person name="Miyake S."/>
            <person name="Morris K."/>
            <person name="Mottagui-Tabar S."/>
            <person name="Mulder N."/>
            <person name="Nakano N."/>
            <person name="Nakauchi H."/>
            <person name="Ng P."/>
            <person name="Nilsson R."/>
            <person name="Nishiguchi S."/>
            <person name="Nishikawa S."/>
            <person name="Nori F."/>
            <person name="Ohara O."/>
            <person name="Okazaki Y."/>
            <person name="Orlando V."/>
            <person name="Pang K.C."/>
            <person name="Pavan W.J."/>
            <person name="Pavesi G."/>
            <person name="Pesole G."/>
            <person name="Petrovsky N."/>
            <person name="Piazza S."/>
            <person name="Reed J."/>
            <person name="Reid J.F."/>
            <person name="Ring B.Z."/>
            <person name="Ringwald M."/>
            <person name="Rost B."/>
            <person name="Ruan Y."/>
            <person name="Salzberg S.L."/>
            <person name="Sandelin A."/>
            <person name="Schneider C."/>
            <person name="Schoenbach C."/>
            <person name="Sekiguchi K."/>
            <person name="Semple C.A."/>
            <person name="Seno S."/>
            <person name="Sessa L."/>
            <person name="Sheng Y."/>
            <person name="Shibata Y."/>
            <person name="Shimada H."/>
            <person name="Shimada K."/>
            <person name="Silva D."/>
            <person name="Sinclair B."/>
            <person name="Sperling S."/>
            <person name="Stupka E."/>
            <person name="Sugiura K."/>
            <person name="Sultana R."/>
            <person name="Takenaka Y."/>
            <person name="Taki K."/>
            <person name="Tammoja K."/>
            <person name="Tan S.L."/>
            <person name="Tang S."/>
            <person name="Taylor M.S."/>
            <person name="Tegner J."/>
            <person name="Teichmann S.A."/>
            <person name="Ueda H.R."/>
            <person name="van Nimwegen E."/>
            <person name="Verardo R."/>
            <person name="Wei C.L."/>
            <person name="Yagi K."/>
            <person name="Yamanishi H."/>
            <person name="Zabarovsky E."/>
            <person name="Zhu S."/>
            <person name="Zimmer A."/>
            <person name="Hide W."/>
            <person name="Bult C."/>
            <person name="Grimmond S.M."/>
            <person name="Teasdale R.D."/>
            <person name="Liu E.T."/>
            <person name="Brusic V."/>
            <person name="Quackenbush J."/>
            <person name="Wahlestedt C."/>
            <person name="Mattick J.S."/>
            <person name="Hume D.A."/>
            <person name="Kai C."/>
            <person name="Sasaki D."/>
            <person name="Tomaru Y."/>
            <person name="Fukuda S."/>
            <person name="Kanamori-Katayama M."/>
            <person name="Suzuki M."/>
            <person name="Aoki J."/>
            <person name="Arakawa T."/>
            <person name="Iida J."/>
            <person name="Imamura K."/>
            <person name="Itoh M."/>
            <person name="Kato T."/>
            <person name="Kawaji H."/>
            <person name="Kawagashira N."/>
            <person name="Kawashima T."/>
            <person name="Kojima M."/>
            <person name="Kondo S."/>
            <person name="Konno H."/>
            <person name="Nakano K."/>
            <person name="Ninomiya N."/>
            <person name="Nishio T."/>
            <person name="Okada M."/>
            <person name="Plessy C."/>
            <person name="Shibata K."/>
            <person name="Shiraki T."/>
            <person name="Suzuki S."/>
            <person name="Tagami M."/>
            <person name="Waki K."/>
            <person name="Watahiki A."/>
            <person name="Okamura-Oho Y."/>
            <person name="Suzuki H."/>
            <person name="Kawai J."/>
            <person name="Hayashizaki Y."/>
        </authorList>
    </citation>
    <scope>NUCLEOTIDE SEQUENCE [LARGE SCALE MRNA]</scope>
    <source>
        <strain>C57BL/6J</strain>
        <tissue>Lung</tissue>
    </source>
</reference>
<reference key="4">
    <citation type="journal article" date="2004" name="Genome Res.">
        <title>The status, quality, and expansion of the NIH full-length cDNA project: the Mammalian Gene Collection (MGC).</title>
        <authorList>
            <consortium name="The MGC Project Team"/>
        </authorList>
    </citation>
    <scope>NUCLEOTIDE SEQUENCE [LARGE SCALE MRNA]</scope>
    <source>
        <strain>C57BL/6J</strain>
        <tissue>Mammary gland</tissue>
    </source>
</reference>
<reference key="5">
    <citation type="journal article" date="1997" name="Biochim. Biophys. Acta">
        <title>Cloning, expression, purification, and characterization of the murine lysosomal acid alpha-mannosidase.</title>
        <authorList>
            <person name="Merkle R.K."/>
            <person name="Zhang Y."/>
            <person name="Ruest P.J."/>
            <person name="Lal A."/>
            <person name="Liao Y.-F."/>
            <person name="Moremen K.W."/>
        </authorList>
    </citation>
    <scope>NUCLEOTIDE SEQUENCE [MRNA] OF 3-1013</scope>
    <source>
        <tissue>Liver</tissue>
    </source>
</reference>
<reference key="6">
    <citation type="journal article" date="2010" name="Cell">
        <title>A tissue-specific atlas of mouse protein phosphorylation and expression.</title>
        <authorList>
            <person name="Huttlin E.L."/>
            <person name="Jedrychowski M.P."/>
            <person name="Elias J.E."/>
            <person name="Goswami T."/>
            <person name="Rad R."/>
            <person name="Beausoleil S.A."/>
            <person name="Villen J."/>
            <person name="Haas W."/>
            <person name="Sowa M.E."/>
            <person name="Gygi S.P."/>
        </authorList>
    </citation>
    <scope>IDENTIFICATION BY MASS SPECTROMETRY [LARGE SCALE ANALYSIS]</scope>
    <source>
        <tissue>Kidney</tissue>
        <tissue>Liver</tissue>
        <tissue>Lung</tissue>
        <tissue>Pancreas</tissue>
        <tissue>Spleen</tissue>
        <tissue>Testis</tissue>
    </source>
</reference>
<sequence>MGTGPLTSGVRAGGGNTGWLWMSSCNLGSPVLPISFLFWLLLAAPGARAAGYKTCPPTKPGMLNVHLLPHTHDDVGWLKTVDQYYYGILSDVQHASVQYILDSVVSSLLEKPTRRFIYVEMAFFSRWWKQQTSATQDAVRNLVRQGRLEFVNGGWVMNDEAATHYGAIVDQMTLGLRFLQDTFGSDGLPRVAWHIDPFGHSREQASLFAQMGFDGFFLGRIDYQDKLNRKKKLRMEELWRASDSLEPPAADLFTGVLPNNYNPPKYLCWDVLCTDPPVVDNPRSPEFNAKTLVNYFLKLASSQKGFYRTNHTVMTMGSDFHYENANMWFKNMDKLIRLVNAQQVNGSLVHVLYSTPTCYLWELNKANLTWTVKEDDFFPYADGPHMFWTGYFSSRPALKRYERLSYNFLQVCNQLEALVGPEANVGPYGSGDSAPLQEAMAVLQHHDAVSGTARQNVVNDYARQLAAGWGPCEVLVSNALARLSHYKQNFSFCRELNISICPVSQTSERFQVTLYNPLGRKVDQMVRLPVYEGNFIVKDPHDKNISSNVVMVPSYYSETYQWELLFPASVPALGFSTYSVAKMSDLNHQAHNLLSRPRKHKSHHVLVIENKYMRATFDSGTGLLMKIENLEQNLSLPVSQGFFWYNASVGDEESSQASGAYIFRPNVGKPIPVSRWAQISLVKTALVQEVHQNFSAWCSQVIRLYKGQRHLELEWTVGPIPVRDDWGKEVISRFDTPMKTKGQFFTDSNGREILKRRDDYRPTWTLNQTEPVAGNYYPVNTRIYITDGQMQLTVLTDRSQGGSSLQDGSLELMVHRRLLVDDDRGVSEPLLETDTGDKVRGRHLVLLSSVSDAAARHRLLAEQEVLAPQVVLSLGGSSPYHSRATPKTQFSGLRQELPPQVHLLTLARWGPKMLLLRLEHQFALKEDSDRNLSSPVTLNVQNLFQTFTINYLQETTLAANQPLSRASRLKWMTNTGPTSYPEPSKLDPTSVTLKPMEIRTFLASVQWQEHRPA</sequence>
<keyword id="KW-1015">Disulfide bond</keyword>
<keyword id="KW-0325">Glycoprotein</keyword>
<keyword id="KW-0326">Glycosidase</keyword>
<keyword id="KW-0378">Hydrolase</keyword>
<keyword id="KW-0458">Lysosome</keyword>
<keyword id="KW-0479">Metal-binding</keyword>
<keyword id="KW-1185">Reference proteome</keyword>
<keyword id="KW-0732">Signal</keyword>
<keyword id="KW-0862">Zinc</keyword>
<proteinExistence type="evidence at protein level"/>
<comment type="function">
    <text>Necessary for the catabolism of N-linked carbohydrates released during glycoprotein turnover.</text>
</comment>
<comment type="catalytic activity">
    <reaction>
        <text>Hydrolysis of terminal, non-reducing alpha-D-mannose residues in alpha-D-mannosides.</text>
        <dbReference type="EC" id="3.2.1.24"/>
    </reaction>
</comment>
<comment type="cofactor">
    <cofactor evidence="1">
        <name>Zn(2+)</name>
        <dbReference type="ChEBI" id="CHEBI:29105"/>
    </cofactor>
    <text evidence="1">Binds 1 zinc ion per subunit.</text>
</comment>
<comment type="subcellular location">
    <subcellularLocation>
        <location>Lysosome</location>
    </subcellularLocation>
</comment>
<comment type="similarity">
    <text evidence="3">Belongs to the glycosyl hydrolase 38 family.</text>
</comment>
<comment type="sequence caution" evidence="3">
    <conflict type="erroneous initiation">
        <sequence resource="EMBL-CDS" id="AAC09470"/>
    </conflict>
    <text>Truncated N-terminus.</text>
</comment>
<comment type="sequence caution" evidence="3">
    <conflict type="erroneous initiation">
        <sequence resource="EMBL-CDS" id="AAC53369"/>
    </conflict>
    <text>Truncated N-terminus.</text>
</comment>
<organism>
    <name type="scientific">Mus musculus</name>
    <name type="common">Mouse</name>
    <dbReference type="NCBI Taxonomy" id="10090"/>
    <lineage>
        <taxon>Eukaryota</taxon>
        <taxon>Metazoa</taxon>
        <taxon>Chordata</taxon>
        <taxon>Craniata</taxon>
        <taxon>Vertebrata</taxon>
        <taxon>Euteleostomi</taxon>
        <taxon>Mammalia</taxon>
        <taxon>Eutheria</taxon>
        <taxon>Euarchontoglires</taxon>
        <taxon>Glires</taxon>
        <taxon>Rodentia</taxon>
        <taxon>Myomorpha</taxon>
        <taxon>Muroidea</taxon>
        <taxon>Muridae</taxon>
        <taxon>Murinae</taxon>
        <taxon>Mus</taxon>
        <taxon>Mus</taxon>
    </lineage>
</organism>
<dbReference type="EC" id="3.2.1.24"/>
<dbReference type="EMBL" id="U29947">
    <property type="protein sequence ID" value="AAC53369.1"/>
    <property type="status" value="ALT_INIT"/>
    <property type="molecule type" value="mRNA"/>
</dbReference>
<dbReference type="EMBL" id="AF044192">
    <property type="protein sequence ID" value="AAC78560.1"/>
    <property type="molecule type" value="Genomic_DNA"/>
</dbReference>
<dbReference type="EMBL" id="AF044174">
    <property type="protein sequence ID" value="AAC78560.1"/>
    <property type="status" value="JOINED"/>
    <property type="molecule type" value="Genomic_DNA"/>
</dbReference>
<dbReference type="EMBL" id="AF044175">
    <property type="protein sequence ID" value="AAC78560.1"/>
    <property type="status" value="JOINED"/>
    <property type="molecule type" value="Genomic_DNA"/>
</dbReference>
<dbReference type="EMBL" id="AF044176">
    <property type="protein sequence ID" value="AAC78560.1"/>
    <property type="status" value="JOINED"/>
    <property type="molecule type" value="Genomic_DNA"/>
</dbReference>
<dbReference type="EMBL" id="AF044177">
    <property type="protein sequence ID" value="AAC78560.1"/>
    <property type="status" value="JOINED"/>
    <property type="molecule type" value="Genomic_DNA"/>
</dbReference>
<dbReference type="EMBL" id="AF044178">
    <property type="protein sequence ID" value="AAC78560.1"/>
    <property type="status" value="JOINED"/>
    <property type="molecule type" value="Genomic_DNA"/>
</dbReference>
<dbReference type="EMBL" id="AF044179">
    <property type="protein sequence ID" value="AAC78560.1"/>
    <property type="status" value="JOINED"/>
    <property type="molecule type" value="Genomic_DNA"/>
</dbReference>
<dbReference type="EMBL" id="AF044180">
    <property type="protein sequence ID" value="AAC78560.1"/>
    <property type="status" value="JOINED"/>
    <property type="molecule type" value="Genomic_DNA"/>
</dbReference>
<dbReference type="EMBL" id="AF044181">
    <property type="protein sequence ID" value="AAC78560.1"/>
    <property type="status" value="JOINED"/>
    <property type="molecule type" value="Genomic_DNA"/>
</dbReference>
<dbReference type="EMBL" id="AF044182">
    <property type="protein sequence ID" value="AAC78560.1"/>
    <property type="status" value="JOINED"/>
    <property type="molecule type" value="Genomic_DNA"/>
</dbReference>
<dbReference type="EMBL" id="AF044183">
    <property type="protein sequence ID" value="AAC78560.1"/>
    <property type="status" value="JOINED"/>
    <property type="molecule type" value="Genomic_DNA"/>
</dbReference>
<dbReference type="EMBL" id="AF044184">
    <property type="protein sequence ID" value="AAC78560.1"/>
    <property type="status" value="JOINED"/>
    <property type="molecule type" value="Genomic_DNA"/>
</dbReference>
<dbReference type="EMBL" id="AF044185">
    <property type="protein sequence ID" value="AAC78560.1"/>
    <property type="status" value="JOINED"/>
    <property type="molecule type" value="Genomic_DNA"/>
</dbReference>
<dbReference type="EMBL" id="AF044186">
    <property type="protein sequence ID" value="AAC78560.1"/>
    <property type="status" value="JOINED"/>
    <property type="molecule type" value="Genomic_DNA"/>
</dbReference>
<dbReference type="EMBL" id="AF044187">
    <property type="protein sequence ID" value="AAC78560.1"/>
    <property type="status" value="JOINED"/>
    <property type="molecule type" value="Genomic_DNA"/>
</dbReference>
<dbReference type="EMBL" id="AF044188">
    <property type="protein sequence ID" value="AAC78560.1"/>
    <property type="status" value="JOINED"/>
    <property type="molecule type" value="Genomic_DNA"/>
</dbReference>
<dbReference type="EMBL" id="AF044189">
    <property type="protein sequence ID" value="AAC78560.1"/>
    <property type="status" value="JOINED"/>
    <property type="molecule type" value="Genomic_DNA"/>
</dbReference>
<dbReference type="EMBL" id="AF044190">
    <property type="protein sequence ID" value="AAC78560.1"/>
    <property type="status" value="JOINED"/>
    <property type="molecule type" value="Genomic_DNA"/>
</dbReference>
<dbReference type="EMBL" id="AF044191">
    <property type="protein sequence ID" value="AAC78560.1"/>
    <property type="status" value="JOINED"/>
    <property type="molecule type" value="Genomic_DNA"/>
</dbReference>
<dbReference type="EMBL" id="AK147928">
    <property type="protein sequence ID" value="BAE28235.1"/>
    <property type="molecule type" value="mRNA"/>
</dbReference>
<dbReference type="EMBL" id="AK004817">
    <property type="protein sequence ID" value="BAB23588.1"/>
    <property type="molecule type" value="mRNA"/>
</dbReference>
<dbReference type="EMBL" id="BC005430">
    <property type="protein sequence ID" value="AAH05430.1"/>
    <property type="molecule type" value="mRNA"/>
</dbReference>
<dbReference type="EMBL" id="U87240">
    <property type="protein sequence ID" value="AAC09470.1"/>
    <property type="status" value="ALT_INIT"/>
    <property type="molecule type" value="mRNA"/>
</dbReference>
<dbReference type="CCDS" id="CCDS22494.1"/>
<dbReference type="PIR" id="T42385">
    <property type="entry name" value="T42385"/>
</dbReference>
<dbReference type="RefSeq" id="NP_034894.2">
    <property type="nucleotide sequence ID" value="NM_010764.3"/>
</dbReference>
<dbReference type="SMR" id="O09159"/>
<dbReference type="BioGRID" id="201305">
    <property type="interactions" value="25"/>
</dbReference>
<dbReference type="FunCoup" id="O09159">
    <property type="interactions" value="809"/>
</dbReference>
<dbReference type="IntAct" id="O09159">
    <property type="interactions" value="1"/>
</dbReference>
<dbReference type="STRING" id="10090.ENSMUSP00000034121"/>
<dbReference type="CAZy" id="GH38">
    <property type="family name" value="Glycoside Hydrolase Family 38"/>
</dbReference>
<dbReference type="GlyConnect" id="2491">
    <property type="glycosylation" value="3 N-Linked glycans (3 sites)"/>
</dbReference>
<dbReference type="GlyCosmos" id="O09159">
    <property type="glycosylation" value="11 sites, 3 glycans"/>
</dbReference>
<dbReference type="GlyGen" id="O09159">
    <property type="glycosylation" value="12 sites, 7 N-linked glycans (6 sites), 1 O-linked glycan (1 site)"/>
</dbReference>
<dbReference type="iPTMnet" id="O09159"/>
<dbReference type="PhosphoSitePlus" id="O09159"/>
<dbReference type="CPTAC" id="non-CPTAC-3591"/>
<dbReference type="jPOST" id="O09159"/>
<dbReference type="PaxDb" id="10090-ENSMUSP00000034121"/>
<dbReference type="PeptideAtlas" id="O09159"/>
<dbReference type="ProteomicsDB" id="287287"/>
<dbReference type="Pumba" id="O09159"/>
<dbReference type="DNASU" id="17159"/>
<dbReference type="Ensembl" id="ENSMUST00000034121.11">
    <property type="protein sequence ID" value="ENSMUSP00000034121.10"/>
    <property type="gene ID" value="ENSMUSG00000005142.11"/>
</dbReference>
<dbReference type="GeneID" id="17159"/>
<dbReference type="KEGG" id="mmu:17159"/>
<dbReference type="UCSC" id="uc009mpk.1">
    <property type="organism name" value="mouse"/>
</dbReference>
<dbReference type="AGR" id="MGI:107286"/>
<dbReference type="CTD" id="4125"/>
<dbReference type="MGI" id="MGI:107286">
    <property type="gene designation" value="Man2b1"/>
</dbReference>
<dbReference type="VEuPathDB" id="HostDB:ENSMUSG00000005142"/>
<dbReference type="eggNOG" id="KOG1959">
    <property type="taxonomic scope" value="Eukaryota"/>
</dbReference>
<dbReference type="GeneTree" id="ENSGT01030000234638"/>
<dbReference type="HOGENOM" id="CLU_004690_2_0_1"/>
<dbReference type="InParanoid" id="O09159"/>
<dbReference type="OMA" id="FIWRPSK"/>
<dbReference type="PhylomeDB" id="O09159"/>
<dbReference type="TreeFam" id="TF313840"/>
<dbReference type="BRENDA" id="3.2.1.24">
    <property type="organism ID" value="3474"/>
</dbReference>
<dbReference type="Reactome" id="R-MMU-6798695">
    <property type="pathway name" value="Neutrophil degranulation"/>
</dbReference>
<dbReference type="Reactome" id="R-MMU-8853383">
    <property type="pathway name" value="Lysosomal oligosaccharide catabolism"/>
</dbReference>
<dbReference type="BioGRID-ORCS" id="17159">
    <property type="hits" value="4 hits in 78 CRISPR screens"/>
</dbReference>
<dbReference type="ChiTaRS" id="Man2b1">
    <property type="organism name" value="mouse"/>
</dbReference>
<dbReference type="PRO" id="PR:O09159"/>
<dbReference type="Proteomes" id="UP000000589">
    <property type="component" value="Chromosome 8"/>
</dbReference>
<dbReference type="RNAct" id="O09159">
    <property type="molecule type" value="protein"/>
</dbReference>
<dbReference type="Bgee" id="ENSMUSG00000005142">
    <property type="expression patterns" value="Expressed in stroma of bone marrow and 275 other cell types or tissues"/>
</dbReference>
<dbReference type="ExpressionAtlas" id="O09159">
    <property type="expression patterns" value="baseline and differential"/>
</dbReference>
<dbReference type="GO" id="GO:0005615">
    <property type="term" value="C:extracellular space"/>
    <property type="evidence" value="ECO:0007669"/>
    <property type="project" value="Ensembl"/>
</dbReference>
<dbReference type="GO" id="GO:0043202">
    <property type="term" value="C:lysosomal lumen"/>
    <property type="evidence" value="ECO:0000314"/>
    <property type="project" value="MGI"/>
</dbReference>
<dbReference type="GO" id="GO:0005654">
    <property type="term" value="C:nucleoplasm"/>
    <property type="evidence" value="ECO:0007669"/>
    <property type="project" value="Ensembl"/>
</dbReference>
<dbReference type="GO" id="GO:0004559">
    <property type="term" value="F:alpha-mannosidase activity"/>
    <property type="evidence" value="ECO:0000314"/>
    <property type="project" value="MGI"/>
</dbReference>
<dbReference type="GO" id="GO:0005537">
    <property type="term" value="F:D-mannose binding"/>
    <property type="evidence" value="ECO:0007669"/>
    <property type="project" value="Ensembl"/>
</dbReference>
<dbReference type="GO" id="GO:0046872">
    <property type="term" value="F:metal ion binding"/>
    <property type="evidence" value="ECO:0007669"/>
    <property type="project" value="UniProtKB-KW"/>
</dbReference>
<dbReference type="GO" id="GO:0007611">
    <property type="term" value="P:learning or memory"/>
    <property type="evidence" value="ECO:0000315"/>
    <property type="project" value="MGI"/>
</dbReference>
<dbReference type="GO" id="GO:0006013">
    <property type="term" value="P:mannose metabolic process"/>
    <property type="evidence" value="ECO:0000314"/>
    <property type="project" value="MGI"/>
</dbReference>
<dbReference type="GO" id="GO:0009313">
    <property type="term" value="P:oligosaccharide catabolic process"/>
    <property type="evidence" value="ECO:0000314"/>
    <property type="project" value="MGI"/>
</dbReference>
<dbReference type="GO" id="GO:0036211">
    <property type="term" value="P:protein modification process"/>
    <property type="evidence" value="ECO:0007669"/>
    <property type="project" value="Ensembl"/>
</dbReference>
<dbReference type="CDD" id="cd10810">
    <property type="entry name" value="GH38N_AMII_LAM_like"/>
    <property type="match status" value="1"/>
</dbReference>
<dbReference type="FunFam" id="1.20.1270.50:FF:000002">
    <property type="entry name" value="Alpha-mannosidase"/>
    <property type="match status" value="1"/>
</dbReference>
<dbReference type="FunFam" id="1.20.1270.50:FF:000003">
    <property type="entry name" value="Alpha-mannosidase"/>
    <property type="match status" value="1"/>
</dbReference>
<dbReference type="FunFam" id="2.60.40.1180:FF:000016">
    <property type="entry name" value="Alpha-mannosidase"/>
    <property type="match status" value="1"/>
</dbReference>
<dbReference type="FunFam" id="2.60.40.1360:FF:000002">
    <property type="entry name" value="Alpha-mannosidase"/>
    <property type="match status" value="1"/>
</dbReference>
<dbReference type="FunFam" id="2.70.98.30:FF:000003">
    <property type="entry name" value="Alpha-mannosidase"/>
    <property type="match status" value="1"/>
</dbReference>
<dbReference type="FunFam" id="3.20.110.10:FF:000001">
    <property type="entry name" value="Alpha-mannosidase"/>
    <property type="match status" value="1"/>
</dbReference>
<dbReference type="Gene3D" id="2.60.40.1360">
    <property type="match status" value="1"/>
</dbReference>
<dbReference type="Gene3D" id="3.20.110.10">
    <property type="entry name" value="Glycoside hydrolase 38, N terminal domain"/>
    <property type="match status" value="1"/>
</dbReference>
<dbReference type="Gene3D" id="1.20.1270.50">
    <property type="entry name" value="Glycoside hydrolase family 38, central domain"/>
    <property type="match status" value="2"/>
</dbReference>
<dbReference type="Gene3D" id="2.60.40.1180">
    <property type="entry name" value="Golgi alpha-mannosidase II"/>
    <property type="match status" value="1"/>
</dbReference>
<dbReference type="Gene3D" id="2.70.98.30">
    <property type="entry name" value="Golgi alpha-mannosidase II, domain 4"/>
    <property type="match status" value="1"/>
</dbReference>
<dbReference type="InterPro" id="IPR011013">
    <property type="entry name" value="Gal_mutarotase_sf_dom"/>
</dbReference>
<dbReference type="InterPro" id="IPR041147">
    <property type="entry name" value="GH38_C"/>
</dbReference>
<dbReference type="InterPro" id="IPR011330">
    <property type="entry name" value="Glyco_hydro/deAcase_b/a-brl"/>
</dbReference>
<dbReference type="InterPro" id="IPR011682">
    <property type="entry name" value="Glyco_hydro_38_C"/>
</dbReference>
<dbReference type="InterPro" id="IPR015341">
    <property type="entry name" value="Glyco_hydro_38_cen"/>
</dbReference>
<dbReference type="InterPro" id="IPR037094">
    <property type="entry name" value="Glyco_hydro_38_cen_sf"/>
</dbReference>
<dbReference type="InterPro" id="IPR000602">
    <property type="entry name" value="Glyco_hydro_38_N"/>
</dbReference>
<dbReference type="InterPro" id="IPR027291">
    <property type="entry name" value="Glyco_hydro_38_N_sf"/>
</dbReference>
<dbReference type="InterPro" id="IPR028995">
    <property type="entry name" value="Glyco_hydro_57/38_cen_sf"/>
</dbReference>
<dbReference type="InterPro" id="IPR013780">
    <property type="entry name" value="Glyco_hydro_b"/>
</dbReference>
<dbReference type="InterPro" id="IPR050843">
    <property type="entry name" value="Glycosyl_Hydrlase_38"/>
</dbReference>
<dbReference type="InterPro" id="IPR048534">
    <property type="entry name" value="Man2a1-like_dom"/>
</dbReference>
<dbReference type="PANTHER" id="PTHR11607">
    <property type="entry name" value="ALPHA-MANNOSIDASE"/>
    <property type="match status" value="1"/>
</dbReference>
<dbReference type="PANTHER" id="PTHR11607:SF3">
    <property type="entry name" value="LYSOSOMAL ALPHA-MANNOSIDASE"/>
    <property type="match status" value="1"/>
</dbReference>
<dbReference type="Pfam" id="PF09261">
    <property type="entry name" value="Alpha-mann_mid"/>
    <property type="match status" value="1"/>
</dbReference>
<dbReference type="Pfam" id="PF17677">
    <property type="entry name" value="Glyco_hydro38C2"/>
    <property type="match status" value="1"/>
</dbReference>
<dbReference type="Pfam" id="PF07748">
    <property type="entry name" value="Glyco_hydro_38C"/>
    <property type="match status" value="1"/>
</dbReference>
<dbReference type="Pfam" id="PF01074">
    <property type="entry name" value="Glyco_hydro_38N"/>
    <property type="match status" value="1"/>
</dbReference>
<dbReference type="Pfam" id="PF21260">
    <property type="entry name" value="Laman-like_dom"/>
    <property type="match status" value="1"/>
</dbReference>
<dbReference type="SMART" id="SM00872">
    <property type="entry name" value="Alpha-mann_mid"/>
    <property type="match status" value="1"/>
</dbReference>
<dbReference type="SUPFAM" id="SSF88688">
    <property type="entry name" value="Families 57/38 glycoside transferase middle domain"/>
    <property type="match status" value="1"/>
</dbReference>
<dbReference type="SUPFAM" id="SSF74650">
    <property type="entry name" value="Galactose mutarotase-like"/>
    <property type="match status" value="1"/>
</dbReference>
<dbReference type="SUPFAM" id="SSF88713">
    <property type="entry name" value="Glycoside hydrolase/deacetylase"/>
    <property type="match status" value="1"/>
</dbReference>
<name>MA2B1_MOUSE</name>
<feature type="signal peptide" evidence="2">
    <location>
        <begin position="1"/>
        <end position="49"/>
    </location>
</feature>
<feature type="chain" id="PRO_0000012076" description="Lysosomal alpha-mannosidase">
    <location>
        <begin position="50"/>
        <end position="1013"/>
    </location>
</feature>
<feature type="active site" description="Nucleophile" evidence="1">
    <location>
        <position position="196"/>
    </location>
</feature>
<feature type="binding site" evidence="1">
    <location>
        <position position="72"/>
    </location>
    <ligand>
        <name>Zn(2+)</name>
        <dbReference type="ChEBI" id="CHEBI:29105"/>
    </ligand>
</feature>
<feature type="binding site" evidence="1">
    <location>
        <position position="74"/>
    </location>
    <ligand>
        <name>Zn(2+)</name>
        <dbReference type="ChEBI" id="CHEBI:29105"/>
    </ligand>
</feature>
<feature type="binding site" evidence="1">
    <location>
        <position position="196"/>
    </location>
    <ligand>
        <name>Zn(2+)</name>
        <dbReference type="ChEBI" id="CHEBI:29105"/>
    </ligand>
</feature>
<feature type="binding site" evidence="1">
    <location>
        <position position="446"/>
    </location>
    <ligand>
        <name>Zn(2+)</name>
        <dbReference type="ChEBI" id="CHEBI:29105"/>
    </ligand>
</feature>
<feature type="glycosylation site" description="N-linked (GlcNAc...) asparagine" evidence="2">
    <location>
        <position position="310"/>
    </location>
</feature>
<feature type="glycosylation site" description="N-linked (GlcNAc...) asparagine" evidence="2">
    <location>
        <position position="345"/>
    </location>
</feature>
<feature type="glycosylation site" description="N-linked (GlcNAc...) asparagine" evidence="2">
    <location>
        <position position="367"/>
    </location>
</feature>
<feature type="glycosylation site" description="N-linked (GlcNAc...) asparagine" evidence="2">
    <location>
        <position position="489"/>
    </location>
</feature>
<feature type="glycosylation site" description="N-linked (GlcNAc...) asparagine" evidence="2">
    <location>
        <position position="497"/>
    </location>
</feature>
<feature type="glycosylation site" description="N-linked (GlcNAc...) asparagine" evidence="2">
    <location>
        <position position="544"/>
    </location>
</feature>
<feature type="glycosylation site" description="N-linked (GlcNAc...) asparagine" evidence="2">
    <location>
        <position position="633"/>
    </location>
</feature>
<feature type="glycosylation site" description="N-linked (GlcNAc...) asparagine" evidence="2">
    <location>
        <position position="646"/>
    </location>
</feature>
<feature type="glycosylation site" description="N-linked (GlcNAc...) asparagine" evidence="2">
    <location>
        <position position="693"/>
    </location>
</feature>
<feature type="glycosylation site" description="N-linked (GlcNAc...) asparagine" evidence="2">
    <location>
        <position position="767"/>
    </location>
</feature>
<feature type="glycosylation site" description="N-linked (GlcNAc...) asparagine" evidence="2">
    <location>
        <position position="931"/>
    </location>
</feature>
<feature type="disulfide bond" evidence="1">
    <location>
        <begin position="55"/>
        <end position="358"/>
    </location>
</feature>
<feature type="disulfide bond" evidence="1">
    <location>
        <begin position="268"/>
        <end position="273"/>
    </location>
</feature>
<feature type="disulfide bond" evidence="1">
    <location>
        <begin position="412"/>
        <end position="472"/>
    </location>
</feature>
<feature type="disulfide bond" evidence="1">
    <location>
        <begin position="493"/>
        <end position="501"/>
    </location>
</feature>
<feature type="sequence conflict" description="In Ref. 1; AAC53369 and 2; AAC78560." evidence="3" ref="1 2">
    <original>PGARA</original>
    <variation>LASG</variation>
    <location>
        <begin position="45"/>
        <end position="49"/>
    </location>
</feature>
<feature type="sequence conflict" description="In Ref. 1; AAC53369, 2; AAC78560, 4; AAH05430 and 5; AAC09470." evidence="3" ref="1 2 4 5">
    <original>V</original>
    <variation>A</variation>
    <location>
        <position position="344"/>
    </location>
</feature>
<feature type="sequence conflict" description="In Ref. 1; AAC53369, 2; AAC78560, 4; AAH05430 and 5; AAC09470." evidence="3" ref="1 2 4 5">
    <original>Y</original>
    <variation>F</variation>
    <location>
        <position position="980"/>
    </location>
</feature>
<protein>
    <recommendedName>
        <fullName>Lysosomal alpha-mannosidase</fullName>
        <shortName>Laman</shortName>
        <ecNumber>3.2.1.24</ecNumber>
    </recommendedName>
    <alternativeName>
        <fullName>Lysosomal acid alpha-mannosidase</fullName>
    </alternativeName>
    <alternativeName>
        <fullName>Mannosidase alpha class 2B member 1</fullName>
    </alternativeName>
    <alternativeName>
        <fullName>Mannosidase alpha-B</fullName>
    </alternativeName>
</protein>